<organism>
    <name type="scientific">Bothrops jararacussu</name>
    <name type="common">Jararacussu</name>
    <dbReference type="NCBI Taxonomy" id="8726"/>
    <lineage>
        <taxon>Eukaryota</taxon>
        <taxon>Metazoa</taxon>
        <taxon>Chordata</taxon>
        <taxon>Craniata</taxon>
        <taxon>Vertebrata</taxon>
        <taxon>Euteleostomi</taxon>
        <taxon>Lepidosauria</taxon>
        <taxon>Squamata</taxon>
        <taxon>Bifurcata</taxon>
        <taxon>Unidentata</taxon>
        <taxon>Episquamata</taxon>
        <taxon>Toxicofera</taxon>
        <taxon>Serpentes</taxon>
        <taxon>Colubroidea</taxon>
        <taxon>Viperidae</taxon>
        <taxon>Crotalinae</taxon>
        <taxon>Bothrops</taxon>
    </lineage>
</organism>
<sequence length="144" mass="15982">MVLSRLAASGLLLLALLALSVDGKPVQQWAQSWPGPNIPQLLVQQWAQGGWPRPGPEIPPLTVQQWAQNWPHPQIPPLTVQQWAQGRPPGPPIPPLTVQQWAQARPPHPPIPPAPLQKWAPVQKWAPVQKWAPVQKWAPLLQPT</sequence>
<name>BNP_BOTJR</name>
<protein>
    <recommendedName>
        <fullName>Bradykinin-potentiating and C-type natriuretic peptides isoform 2</fullName>
    </recommendedName>
    <alternativeName>
        <fullName>BPP-CNP</fullName>
    </alternativeName>
    <component>
        <recommendedName>
            <fullName evidence="2">Bradykinin-potentiating peptide 10a</fullName>
            <shortName evidence="2">BPP-10a</shortName>
        </recommendedName>
    </component>
    <component>
        <recommendedName>
            <fullName evidence="2">Bradykinin-potentiating peptide 6a</fullName>
            <shortName evidence="2">BPP-6a</shortName>
        </recommendedName>
    </component>
    <component>
        <recommendedName>
            <fullName evidence="2">Bradykinin-potentiating peptide 13a</fullName>
            <shortName evidence="2">BPP-13a</shortName>
        </recommendedName>
        <alternativeName>
            <fullName evidence="15">Bradykinin-potentiating peptide XIIIa</fullName>
            <shortName evidence="15">BPP-XIIIa</shortName>
        </alternativeName>
    </component>
    <component>
        <recommendedName>
            <fullName evidence="14">Bradykinin-potentiating peptide 10c</fullName>
            <shortName evidence="14">BPP-10c</shortName>
            <shortName evidence="13">BPP-2</shortName>
        </recommendedName>
        <alternativeName>
            <fullName evidence="15">Bradykinin-potentiating peptide Xc</fullName>
            <shortName evidence="15">BPP-Xc</shortName>
        </alternativeName>
    </component>
    <component>
        <recommendedName>
            <fullName evidence="2">Bradykinin-potentiating peptide 10c-F</fullName>
            <shortName evidence="2">BPP-10c-F</shortName>
        </recommendedName>
    </component>
    <component>
        <recommendedName>
            <fullName evidence="2">Bradykinin-potentiating peptide 11b</fullName>
            <shortName evidence="2">BPP-11b</shortName>
        </recommendedName>
    </component>
    <component>
        <recommendedName>
            <fullName evidence="15">Bradykinin-potentiating peptide AP</fullName>
            <shortName evidence="15">BPP-AP</shortName>
        </recommendedName>
    </component>
    <component>
        <recommendedName>
            <fullName evidence="3">Bradykinin-potentiating peptide 11e</fullName>
            <shortName evidence="3">BPP-11e</shortName>
        </recommendedName>
        <alternativeName>
            <fullName evidence="15">Bradykinin-potentiating peptide XIe</fullName>
            <shortName evidence="15">BPP-XIe</shortName>
        </alternativeName>
    </component>
    <component>
        <recommendedName>
            <fullName evidence="1">Bradykinin-potentiating peptide 5a</fullName>
            <shortName evidence="1">BPP-5a</shortName>
        </recommendedName>
        <alternativeName>
            <fullName evidence="2">Bradykinin-potentiating peptide Va</fullName>
            <shortName evidence="2">BPPVa</shortName>
        </alternativeName>
    </component>
</protein>
<accession>Q7T1M3</accession>
<keyword id="KW-0963">Cytoplasm</keyword>
<keyword id="KW-0903">Direct protein sequencing</keyword>
<keyword id="KW-0382">Hypotensive agent</keyword>
<keyword id="KW-0481">Metalloenzyme inhibitor</keyword>
<keyword id="KW-0483">Metalloprotease inhibitor</keyword>
<keyword id="KW-0646">Protease inhibitor</keyword>
<keyword id="KW-0873">Pyrrolidone carboxylic acid</keyword>
<keyword id="KW-0964">Secreted</keyword>
<keyword id="KW-0732">Signal</keyword>
<keyword id="KW-0800">Toxin</keyword>
<keyword id="KW-0838">Vasoactive</keyword>
<evidence type="ECO:0000250" key="1">
    <source>
        <dbReference type="UniProtKB" id="P68515"/>
    </source>
</evidence>
<evidence type="ECO:0000250" key="2">
    <source>
        <dbReference type="UniProtKB" id="Q6LEM5"/>
    </source>
</evidence>
<evidence type="ECO:0000250" key="3">
    <source>
        <dbReference type="UniProtKB" id="Q9PW56"/>
    </source>
</evidence>
<evidence type="ECO:0000255" key="4"/>
<evidence type="ECO:0000256" key="5">
    <source>
        <dbReference type="SAM" id="MobiDB-lite"/>
    </source>
</evidence>
<evidence type="ECO:0000269" key="6">
    <source>
    </source>
</evidence>
<evidence type="ECO:0000269" key="7">
    <source>
    </source>
</evidence>
<evidence type="ECO:0000269" key="8">
    <source>
    </source>
</evidence>
<evidence type="ECO:0000269" key="9">
    <source>
    </source>
</evidence>
<evidence type="ECO:0000269" key="10">
    <source>
    </source>
</evidence>
<evidence type="ECO:0000269" key="11">
    <source>
    </source>
</evidence>
<evidence type="ECO:0000269" key="12">
    <source>
    </source>
</evidence>
<evidence type="ECO:0000303" key="13">
    <source>
    </source>
</evidence>
<evidence type="ECO:0000303" key="14">
    <source>
    </source>
</evidence>
<evidence type="ECO:0000303" key="15">
    <source>
    </source>
</evidence>
<evidence type="ECO:0000305" key="16"/>
<evidence type="ECO:0000305" key="17">
    <source>
    </source>
</evidence>
<evidence type="ECO:0000305" key="18">
    <source>
    </source>
</evidence>
<evidence type="ECO:0000305" key="19">
    <source>
    </source>
</evidence>
<feature type="signal peptide" evidence="4">
    <location>
        <begin position="1"/>
        <end position="23"/>
    </location>
</feature>
<feature type="propeptide" id="PRO_0000335880" evidence="16">
    <location>
        <begin position="24"/>
        <end position="30"/>
    </location>
</feature>
<feature type="peptide" id="PRO_0000335881" description="Bradykinin-potentiating peptide 10a" evidence="2">
    <location>
        <begin position="31"/>
        <end position="40"/>
    </location>
</feature>
<feature type="peptide" id="PRO_0000335882" description="Bradykinin-potentiating peptide 6a" evidence="2">
    <location>
        <begin position="31"/>
        <end position="36"/>
    </location>
</feature>
<feature type="propeptide" id="PRO_0000335883" evidence="16">
    <location>
        <begin position="41"/>
        <end position="47"/>
    </location>
</feature>
<feature type="peptide" id="PRO_0000335884" description="Bradykinin-potentiating peptide 13a" evidence="7 9">
    <location>
        <begin position="48"/>
        <end position="60"/>
    </location>
</feature>
<feature type="propeptide" id="PRO_0000335885" evidence="16">
    <location>
        <begin position="61"/>
        <end position="67"/>
    </location>
</feature>
<feature type="peptide" id="PRO_0000335886" description="Bradykinin-potentiating peptide 10c" evidence="7">
    <location>
        <begin position="68"/>
        <end position="77"/>
    </location>
</feature>
<feature type="peptide" id="PRO_0000335887" description="Bradykinin-potentiating peptide 10c-F" evidence="2">
    <location>
        <begin position="68"/>
        <end position="73"/>
    </location>
</feature>
<feature type="propeptide" id="PRO_0000335888" evidence="16">
    <location>
        <begin position="78"/>
        <end position="84"/>
    </location>
</feature>
<feature type="peptide" id="PRO_0000335889" description="Bradykinin-potentiating peptide 11b" evidence="7">
    <location>
        <begin position="85"/>
        <end position="95"/>
    </location>
</feature>
<feature type="propeptide" id="PRO_0000335890" evidence="16">
    <location>
        <begin position="96"/>
        <end position="102"/>
    </location>
</feature>
<feature type="peptide" id="PRO_0000335891" description="Bradykinin-potentiating peptide AP" evidence="10">
    <location>
        <begin position="103"/>
        <end position="115"/>
    </location>
</feature>
<feature type="peptide" id="PRO_0000335892" description="Bradykinin-potentiating peptide 11e" evidence="7">
    <location>
        <begin position="103"/>
        <end position="113"/>
    </location>
</feature>
<feature type="propeptide" id="PRO_0000335893" evidence="16">
    <location>
        <begin position="114"/>
        <end position="116"/>
    </location>
</feature>
<feature type="peptide" id="PRO_0000335894" description="Bradykinin-potentiating peptide 5a" evidence="1">
    <location>
        <begin position="117"/>
        <end position="121"/>
    </location>
</feature>
<feature type="propeptide" id="PRO_0000335895" evidence="16">
    <location>
        <position position="122"/>
    </location>
</feature>
<feature type="peptide" id="PRO_0000335896" description="Bradykinin-potentiating peptide 5a" evidence="1">
    <location>
        <begin position="123"/>
        <end position="127"/>
    </location>
</feature>
<feature type="propeptide" id="PRO_0000335897" evidence="16">
    <location>
        <begin position="128"/>
        <end position="144" status="greater than"/>
    </location>
</feature>
<feature type="region of interest" description="Disordered" evidence="5">
    <location>
        <begin position="81"/>
        <end position="110"/>
    </location>
</feature>
<feature type="modified residue" description="Pyrrolidone carboxylic acid" evidence="2">
    <location>
        <position position="31"/>
    </location>
</feature>
<feature type="modified residue" description="Pyrrolidone carboxylic acid" evidence="7 9">
    <location>
        <position position="48"/>
    </location>
</feature>
<feature type="modified residue" description="Pyrrolidone carboxylic acid" evidence="7">
    <location>
        <position position="68"/>
    </location>
</feature>
<feature type="modified residue" description="Pyrrolidone carboxylic acid" evidence="7">
    <location>
        <position position="85"/>
    </location>
</feature>
<feature type="modified residue" description="Pyrrolidone carboxylic acid" evidence="7 10">
    <location>
        <position position="103"/>
    </location>
</feature>
<feature type="modified residue" description="Pyrrolidone carboxylic acid" evidence="1">
    <location>
        <position position="117"/>
    </location>
</feature>
<feature type="modified residue" description="Pyrrolidone carboxylic acid" evidence="1">
    <location>
        <position position="123"/>
    </location>
</feature>
<feature type="mutagenesis site" description="Low decrease in ability to enhance AsS activity." evidence="11">
    <original>P</original>
    <variation>A</variation>
    <location>
        <position position="71"/>
    </location>
</feature>
<feature type="mutagenesis site" description="Low decrease in ability to enhance AsS activity." evidence="11">
    <original>P</original>
    <variation>A</variation>
    <location>
        <position position="73"/>
    </location>
</feature>
<feature type="mutagenesis site" description="Low decrease in ability to enhance AsS activity." evidence="11">
    <original>I</original>
    <variation>A</variation>
    <location>
        <position position="75"/>
    </location>
</feature>
<feature type="mutagenesis site" description="Important decrease in ability to enhance AsS activity." evidence="11">
    <original>P</original>
    <variation>A</variation>
    <location>
        <position position="76"/>
    </location>
</feature>
<feature type="mutagenesis site" description="Important decrease in ability to enhance AsS activity." evidence="11">
    <original>P</original>
    <variation>A</variation>
    <location>
        <position position="77"/>
    </location>
</feature>
<feature type="non-terminal residue" evidence="16">
    <location>
        <position position="144"/>
    </location>
</feature>
<proteinExistence type="evidence at protein level"/>
<reference key="1">
    <citation type="submission" date="2003-05" db="EMBL/GenBank/DDBJ databases">
        <title>Cloning and sequence analysis of a Bothrops jararacussu BPPs precursor.</title>
        <authorList>
            <person name="Hayashi M.A.F."/>
            <person name="Lameu C."/>
            <person name="Radis-Baptista G."/>
            <person name="Yamane T."/>
            <person name="Camargo A.C.M."/>
        </authorList>
    </citation>
    <scope>NUCLEOTIDE SEQUENCE [MRNA]</scope>
    <source>
        <tissue>Venom gland</tissue>
    </source>
</reference>
<reference key="2">
    <citation type="journal article" date="2005" name="Rapid Commun. Mass Spectrom.">
        <title>Fast analysis of low molecular mass compounds present in snake venom: identification of ten new pyroglutamate-containing peptides.</title>
        <authorList>
            <person name="Wermelinger L.S."/>
            <person name="Dutra D.L."/>
            <person name="Oliveira-Carvalho A.L."/>
            <person name="Soares M.R."/>
            <person name="Bloch C. Jr."/>
            <person name="Zingali R.B."/>
        </authorList>
    </citation>
    <scope>PROTEIN SEQUENCE OF 48-60; 68-77; 85-95 AND 103-113 (BPP-13A; BPP-10C; BPP-11B AND BPP-11E)</scope>
    <scope>SUBCELLULAR LOCATION</scope>
    <scope>MASS SPECTROMETRY</scope>
    <scope>PYROGLUTAMATE FORMATION AT GLN-48; GLN-68; GLN-85 AND GLN-103</scope>
    <source>
        <tissue>Venom</tissue>
    </source>
</reference>
<reference key="3">
    <citation type="journal article" date="2008" name="J. Mass Spectrom.">
        <title>Peptide fingerprinting of snake venoms by direct infusion nano-electrospray ionization mass spectrometry: potential use in venom identification and taxonomy.</title>
        <authorList>
            <person name="Souza G.H.M.F."/>
            <person name="Catharino R.R."/>
            <person name="Ifa D.R."/>
            <person name="Eberlin M.N."/>
            <person name="Hyslop S."/>
        </authorList>
    </citation>
    <scope>PROTEIN SEQUENCE OF 48-60 (BPP-13A)</scope>
    <scope>IDENTIFICATION BY MASS SPECTROMETRY</scope>
    <scope>SUBCELLULAR LOCATION</scope>
    <scope>PYROGLUTAMATE FORMATION AT GLN-48</scope>
    <source>
        <tissue>Venom</tissue>
    </source>
</reference>
<reference key="4">
    <citation type="journal article" date="2008" name="FEBS J.">
        <title>A novel bradykinin potentiating peptide isolated from Bothrops jararacussu venom using catallytically inactive oligopeptidase EP24.15.</title>
        <authorList>
            <person name="Rioli V."/>
            <person name="Prezoto B.C."/>
            <person name="Konno K."/>
            <person name="Melo R.L."/>
            <person name="Klitzke C.F."/>
            <person name="Ferro E.S."/>
            <person name="Ferreira-Lopes M."/>
            <person name="Camargo A.C.M."/>
            <person name="Portaro F.C.V."/>
        </authorList>
    </citation>
    <scope>PROTEIN SEQUENCE OF 103-115 (BPP-AP)</scope>
    <scope>SYNTHESIS OF 103-115</scope>
    <scope>FUNCTION</scope>
    <scope>SUBCELLULAR LOCATION</scope>
    <scope>PYROGLUTAMATE FORMATION AT GLN-103</scope>
    <scope>MASS SPECTROMETRY</scope>
    <source>
        <tissue>Venom</tissue>
    </source>
</reference>
<reference key="5">
    <citation type="journal article" date="2002" name="Biochemistry">
        <title>Selective inhibition of the C-domain of angiotensin I converting enzyme by bradykinin potentiating peptides.</title>
        <authorList>
            <person name="Cotton J."/>
            <person name="Hayashi M.A."/>
            <person name="Cuniasse P."/>
            <person name="Vazeux G."/>
            <person name="Ianzer D."/>
            <person name="De Camargo A.C."/>
            <person name="Dive V."/>
        </authorList>
    </citation>
    <scope>FUNCTION</scope>
    <scope>SYNTHESIS OF 68-77 (BPP-10C)</scope>
</reference>
<reference key="6">
    <citation type="journal article" date="2007" name="J. Pharmacol. Exp. Ther.">
        <title>Do the cardiovascular effects of angiotensin-converting enzyme (ACE) I involve ACE-independent mechanisms? new insights from proline-rich peptides of Bothrops jararaca.</title>
        <authorList>
            <person name="Ianzer D."/>
            <person name="Santos R.A."/>
            <person name="Etelvino G.M."/>
            <person name="Xavier C.H."/>
            <person name="de Almeida Santos J."/>
            <person name="Mendes E.P."/>
            <person name="Machado L.T."/>
            <person name="Prezoto B.C."/>
            <person name="Dive V."/>
            <person name="de Camargo A.C."/>
        </authorList>
    </citation>
    <scope>FUNCTION (BPP-10C)</scope>
</reference>
<reference key="7">
    <citation type="journal article" date="2009" name="J. Biol. Chem.">
        <title>Argininosuccinate synthetase is a functional target for a snake venom anti-hypertensive peptide: role in arginine and nitric oxide production.</title>
        <authorList>
            <person name="Guerreiro J.R."/>
            <person name="Lameu C."/>
            <person name="Oliveira E.F."/>
            <person name="Klitzke C.F."/>
            <person name="Melo R.L."/>
            <person name="Linares E."/>
            <person name="Augusto O."/>
            <person name="Fox J.W."/>
            <person name="Lebrun I."/>
            <person name="Serrano S.M."/>
            <person name="Camargo A.C."/>
        </authorList>
    </citation>
    <scope>FUNCTION</scope>
    <scope>BIOASSAY</scope>
    <scope>SUBCELLULAR LOCATION</scope>
    <scope>MUTAGENESIS OF PRO-71; PRO-73; ILE-75; PRO-76 AND PRO-77</scope>
</reference>
<reference key="8">
    <citation type="journal article" date="2012" name="Mol. Cell. Proteomics">
        <title>Peptidomics of three Bothrops snake venoms: insights into the molecular diversification of proteomes and peptidomes.</title>
        <authorList>
            <person name="Tashima A.K."/>
            <person name="Zelanis A."/>
            <person name="Kitano E.S."/>
            <person name="Ianzer D."/>
            <person name="Melo R.L."/>
            <person name="Rioli V."/>
            <person name="Sant'anna S.S."/>
            <person name="Schenberg A.C."/>
            <person name="Camargo A.C."/>
            <person name="Serrano S.M.T."/>
        </authorList>
    </citation>
    <scope>FUNCTION</scope>
    <scope>SYNTHESIS OF 68-77 (BPP-10C)</scope>
</reference>
<dbReference type="EMBL" id="AY310915">
    <property type="protein sequence ID" value="AAP83422.1"/>
    <property type="molecule type" value="mRNA"/>
</dbReference>
<dbReference type="GO" id="GO:0005829">
    <property type="term" value="C:cytosol"/>
    <property type="evidence" value="ECO:0007669"/>
    <property type="project" value="UniProtKB-SubCell"/>
</dbReference>
<dbReference type="GO" id="GO:0005576">
    <property type="term" value="C:extracellular region"/>
    <property type="evidence" value="ECO:0007669"/>
    <property type="project" value="UniProtKB-SubCell"/>
</dbReference>
<dbReference type="GO" id="GO:0030414">
    <property type="term" value="F:peptidase inhibitor activity"/>
    <property type="evidence" value="ECO:0007669"/>
    <property type="project" value="UniProtKB-KW"/>
</dbReference>
<dbReference type="GO" id="GO:0090729">
    <property type="term" value="F:toxin activity"/>
    <property type="evidence" value="ECO:0007669"/>
    <property type="project" value="UniProtKB-KW"/>
</dbReference>
<dbReference type="GO" id="GO:0097746">
    <property type="term" value="P:blood vessel diameter maintenance"/>
    <property type="evidence" value="ECO:0007669"/>
    <property type="project" value="UniProtKB-KW"/>
</dbReference>
<dbReference type="GO" id="GO:0008217">
    <property type="term" value="P:regulation of blood pressure"/>
    <property type="evidence" value="ECO:0007669"/>
    <property type="project" value="UniProtKB-KW"/>
</dbReference>
<comment type="function">
    <molecule>Bradykinin-potentiating peptide 10c</molecule>
    <text evidence="6 8 11 12">Peptide with several activities. It inhibits the activity of the angiotensin-converting enzyme (ACE) by a preferential interaction with its C-domain (PubMed:11994001). It evokes transient hypotension (-14 mmHg) similar to that evoked by 0.5 ug of bradykinin, when injected alone into rats. It has a high bradykinin-potentiating effect (120%), when 60 nmol of BPP-10c are coinjected with 0.5 ug of bradykinin into rats (PubMed:22869554). Does not affect angiotensin-1 pressor effects. Shows potent and long-lasting antihypertensive activity as well as a reduction of the heart rate (PubMed:17475904). It also binds and dose-dependently promotes the activation of cytosolic argininosuccinate synthase (ASS1), an enzyme that catalyzes the conversion of citrulline, L-aspartate and ATP to argininosuccinate, AMP and pyrophosphate. It also enhances ASS1-dependent arginine production in HEK 293 cells, as well as in spontaneous hypertensive rat (SHR) and Wistar rat plasma. In addition, it induces the production of nitric-oxide (NO) by HUVEC cells via the endothelial nitric-oxide synthase (NOS3), which use arginine as a substrate and produce NO. It has been shown to be internalized by ASS1-expressing endothelial (HUVEC) and kidney (HEK 293) cells, and is detected homogenously distributed within the cell cytoplasm for up to 2 hours (PubMed:19491403).</text>
</comment>
<comment type="function">
    <molecule>Bradykinin-potentiating peptide 11e</molecule>
    <text>Acts as indirect hypotensive agent. Increases leukocyte rolling flux and adhesion by five-fold in post-capillary venules, without any increments in vasodilation of arterioles.</text>
</comment>
<comment type="function">
    <molecule>Bradykinin-potentiating peptide AP</molecule>
    <text>Acts as indirect hypotensive agent. Potently induces vasodilation of arterioles, with only a small increase in leukocyte rolling flux.</text>
</comment>
<comment type="subcellular location">
    <subcellularLocation>
        <location evidence="7 9 10">Secreted</location>
    </subcellularLocation>
    <subcellularLocation>
        <location>Cytoplasm</location>
        <location>Cytosol</location>
    </subcellularLocation>
    <text>BPP-10c is internalized in the cytosol of prey cells.</text>
</comment>
<comment type="tissue specificity">
    <text evidence="17 18 19">Expressed by venom gland.</text>
</comment>
<comment type="mass spectrometry" mass="1370.75" method="MALDI" evidence="7">
    <molecule>Bradykinin-potentiating peptide 13a</molecule>
</comment>
<comment type="mass spectrometry" mass="1196.65" method="MALDI" evidence="7">
    <molecule>Bradykinin-potentiating peptide 10c</molecule>
</comment>
<comment type="mass spectrometry" mass="1095.66" method="MALDI" evidence="7">
    <molecule>Bradykinin-potentiating peptide 11b</molecule>
</comment>
<comment type="mass spectrometry" mass="1189.71" method="MALDI" evidence="7">
    <molecule>Bradykinin-potentiating peptide 11e</molecule>
</comment>
<comment type="mass spectrometry" mass="1189.6" method="MALDI" evidence="10">
    <molecule>Bradykinin-potentiating peptide 11e</molecule>
</comment>
<comment type="mass spectrometry" mass="1357.7" method="MALDI" evidence="10">
    <molecule>Bradykinin-potentiating peptide AP</molecule>
</comment>
<comment type="similarity">
    <text evidence="16">In the N-terminal section; belongs to the bradykinin-potentiating peptide family.</text>
</comment>